<reference key="1">
    <citation type="journal article" date="2004" name="EMBO J.">
        <title>A novel protein-conjugating system for Ufm1, a ubiquitin-fold modifier.</title>
        <authorList>
            <person name="Komatsu M."/>
            <person name="Chiba T."/>
            <person name="Tatsumi K."/>
            <person name="Iemura S."/>
            <person name="Tanida I."/>
            <person name="Okazaki N."/>
            <person name="Ueno T."/>
            <person name="Kominami E."/>
            <person name="Natsume T."/>
            <person name="Tanaka K."/>
        </authorList>
    </citation>
    <scope>NUCLEOTIDE SEQUENCE [MRNA]</scope>
    <scope>FUNCTION</scope>
    <scope>MUTAGENESIS OF CYS-116</scope>
    <scope>ACTIVE SITE</scope>
</reference>
<reference key="2">
    <citation type="journal article" date="2000" name="Genome Res.">
        <title>Identification of novel human genes evolutionarily conserved in Caenorhabditis elegans by comparative proteomics.</title>
        <authorList>
            <person name="Lai C.-H."/>
            <person name="Chou C.-Y."/>
            <person name="Ch'ang L.-Y."/>
            <person name="Liu C.-S."/>
            <person name="Lin W.-C."/>
        </authorList>
    </citation>
    <scope>NUCLEOTIDE SEQUENCE [LARGE SCALE MRNA]</scope>
</reference>
<reference key="3">
    <citation type="journal article" date="2000" name="Genome Res.">
        <title>Cloning and functional analysis of cDNAs with open reading frames for 300 previously undefined genes expressed in CD34+ hematopoietic stem/progenitor cells.</title>
        <authorList>
            <person name="Zhang Q.-H."/>
            <person name="Ye M."/>
            <person name="Wu X.-Y."/>
            <person name="Ren S.-X."/>
            <person name="Zhao M."/>
            <person name="Zhao C.-J."/>
            <person name="Fu G."/>
            <person name="Shen Y."/>
            <person name="Fan H.-Y."/>
            <person name="Lu G."/>
            <person name="Zhong M."/>
            <person name="Xu X.-R."/>
            <person name="Han Z.-G."/>
            <person name="Zhang J.-W."/>
            <person name="Tao J."/>
            <person name="Huang Q.-H."/>
            <person name="Zhou J."/>
            <person name="Hu G.-X."/>
            <person name="Gu J."/>
            <person name="Chen S.-J."/>
            <person name="Chen Z."/>
        </authorList>
    </citation>
    <scope>NUCLEOTIDE SEQUENCE [LARGE SCALE MRNA]</scope>
    <source>
        <tissue>Umbilical cord blood</tissue>
    </source>
</reference>
<reference key="4">
    <citation type="journal article" date="2004" name="Nat. Genet.">
        <title>Complete sequencing and characterization of 21,243 full-length human cDNAs.</title>
        <authorList>
            <person name="Ota T."/>
            <person name="Suzuki Y."/>
            <person name="Nishikawa T."/>
            <person name="Otsuki T."/>
            <person name="Sugiyama T."/>
            <person name="Irie R."/>
            <person name="Wakamatsu A."/>
            <person name="Hayashi K."/>
            <person name="Sato H."/>
            <person name="Nagai K."/>
            <person name="Kimura K."/>
            <person name="Makita H."/>
            <person name="Sekine M."/>
            <person name="Obayashi M."/>
            <person name="Nishi T."/>
            <person name="Shibahara T."/>
            <person name="Tanaka T."/>
            <person name="Ishii S."/>
            <person name="Yamamoto J."/>
            <person name="Saito K."/>
            <person name="Kawai Y."/>
            <person name="Isono Y."/>
            <person name="Nakamura Y."/>
            <person name="Nagahari K."/>
            <person name="Murakami K."/>
            <person name="Yasuda T."/>
            <person name="Iwayanagi T."/>
            <person name="Wagatsuma M."/>
            <person name="Shiratori A."/>
            <person name="Sudo H."/>
            <person name="Hosoiri T."/>
            <person name="Kaku Y."/>
            <person name="Kodaira H."/>
            <person name="Kondo H."/>
            <person name="Sugawara M."/>
            <person name="Takahashi M."/>
            <person name="Kanda K."/>
            <person name="Yokoi T."/>
            <person name="Furuya T."/>
            <person name="Kikkawa E."/>
            <person name="Omura Y."/>
            <person name="Abe K."/>
            <person name="Kamihara K."/>
            <person name="Katsuta N."/>
            <person name="Sato K."/>
            <person name="Tanikawa M."/>
            <person name="Yamazaki M."/>
            <person name="Ninomiya K."/>
            <person name="Ishibashi T."/>
            <person name="Yamashita H."/>
            <person name="Murakawa K."/>
            <person name="Fujimori K."/>
            <person name="Tanai H."/>
            <person name="Kimata M."/>
            <person name="Watanabe M."/>
            <person name="Hiraoka S."/>
            <person name="Chiba Y."/>
            <person name="Ishida S."/>
            <person name="Ono Y."/>
            <person name="Takiguchi S."/>
            <person name="Watanabe S."/>
            <person name="Yosida M."/>
            <person name="Hotuta T."/>
            <person name="Kusano J."/>
            <person name="Kanehori K."/>
            <person name="Takahashi-Fujii A."/>
            <person name="Hara H."/>
            <person name="Tanase T.-O."/>
            <person name="Nomura Y."/>
            <person name="Togiya S."/>
            <person name="Komai F."/>
            <person name="Hara R."/>
            <person name="Takeuchi K."/>
            <person name="Arita M."/>
            <person name="Imose N."/>
            <person name="Musashino K."/>
            <person name="Yuuki H."/>
            <person name="Oshima A."/>
            <person name="Sasaki N."/>
            <person name="Aotsuka S."/>
            <person name="Yoshikawa Y."/>
            <person name="Matsunawa H."/>
            <person name="Ichihara T."/>
            <person name="Shiohata N."/>
            <person name="Sano S."/>
            <person name="Moriya S."/>
            <person name="Momiyama H."/>
            <person name="Satoh N."/>
            <person name="Takami S."/>
            <person name="Terashima Y."/>
            <person name="Suzuki O."/>
            <person name="Nakagawa S."/>
            <person name="Senoh A."/>
            <person name="Mizoguchi H."/>
            <person name="Goto Y."/>
            <person name="Shimizu F."/>
            <person name="Wakebe H."/>
            <person name="Hishigaki H."/>
            <person name="Watanabe T."/>
            <person name="Sugiyama A."/>
            <person name="Takemoto M."/>
            <person name="Kawakami B."/>
            <person name="Yamazaki M."/>
            <person name="Watanabe K."/>
            <person name="Kumagai A."/>
            <person name="Itakura S."/>
            <person name="Fukuzumi Y."/>
            <person name="Fujimori Y."/>
            <person name="Komiyama M."/>
            <person name="Tashiro H."/>
            <person name="Tanigami A."/>
            <person name="Fujiwara T."/>
            <person name="Ono T."/>
            <person name="Yamada K."/>
            <person name="Fujii Y."/>
            <person name="Ozaki K."/>
            <person name="Hirao M."/>
            <person name="Ohmori Y."/>
            <person name="Kawabata A."/>
            <person name="Hikiji T."/>
            <person name="Kobatake N."/>
            <person name="Inagaki H."/>
            <person name="Ikema Y."/>
            <person name="Okamoto S."/>
            <person name="Okitani R."/>
            <person name="Kawakami T."/>
            <person name="Noguchi S."/>
            <person name="Itoh T."/>
            <person name="Shigeta K."/>
            <person name="Senba T."/>
            <person name="Matsumura K."/>
            <person name="Nakajima Y."/>
            <person name="Mizuno T."/>
            <person name="Morinaga M."/>
            <person name="Sasaki M."/>
            <person name="Togashi T."/>
            <person name="Oyama M."/>
            <person name="Hata H."/>
            <person name="Watanabe M."/>
            <person name="Komatsu T."/>
            <person name="Mizushima-Sugano J."/>
            <person name="Satoh T."/>
            <person name="Shirai Y."/>
            <person name="Takahashi Y."/>
            <person name="Nakagawa K."/>
            <person name="Okumura K."/>
            <person name="Nagase T."/>
            <person name="Nomura N."/>
            <person name="Kikuchi H."/>
            <person name="Masuho Y."/>
            <person name="Yamashita R."/>
            <person name="Nakai K."/>
            <person name="Yada T."/>
            <person name="Nakamura Y."/>
            <person name="Ohara O."/>
            <person name="Isogai T."/>
            <person name="Sugano S."/>
        </authorList>
    </citation>
    <scope>NUCLEOTIDE SEQUENCE [LARGE SCALE MRNA]</scope>
    <source>
        <tissue>Trachea</tissue>
    </source>
</reference>
<reference key="5">
    <citation type="journal article" date="2006" name="Nature">
        <title>The DNA sequence and biological annotation of human chromosome 1.</title>
        <authorList>
            <person name="Gregory S.G."/>
            <person name="Barlow K.F."/>
            <person name="McLay K.E."/>
            <person name="Kaul R."/>
            <person name="Swarbreck D."/>
            <person name="Dunham A."/>
            <person name="Scott C.E."/>
            <person name="Howe K.L."/>
            <person name="Woodfine K."/>
            <person name="Spencer C.C.A."/>
            <person name="Jones M.C."/>
            <person name="Gillson C."/>
            <person name="Searle S."/>
            <person name="Zhou Y."/>
            <person name="Kokocinski F."/>
            <person name="McDonald L."/>
            <person name="Evans R."/>
            <person name="Phillips K."/>
            <person name="Atkinson A."/>
            <person name="Cooper R."/>
            <person name="Jones C."/>
            <person name="Hall R.E."/>
            <person name="Andrews T.D."/>
            <person name="Lloyd C."/>
            <person name="Ainscough R."/>
            <person name="Almeida J.P."/>
            <person name="Ambrose K.D."/>
            <person name="Anderson F."/>
            <person name="Andrew R.W."/>
            <person name="Ashwell R.I.S."/>
            <person name="Aubin K."/>
            <person name="Babbage A.K."/>
            <person name="Bagguley C.L."/>
            <person name="Bailey J."/>
            <person name="Beasley H."/>
            <person name="Bethel G."/>
            <person name="Bird C.P."/>
            <person name="Bray-Allen S."/>
            <person name="Brown J.Y."/>
            <person name="Brown A.J."/>
            <person name="Buckley D."/>
            <person name="Burton J."/>
            <person name="Bye J."/>
            <person name="Carder C."/>
            <person name="Chapman J.C."/>
            <person name="Clark S.Y."/>
            <person name="Clarke G."/>
            <person name="Clee C."/>
            <person name="Cobley V."/>
            <person name="Collier R.E."/>
            <person name="Corby N."/>
            <person name="Coville G.J."/>
            <person name="Davies J."/>
            <person name="Deadman R."/>
            <person name="Dunn M."/>
            <person name="Earthrowl M."/>
            <person name="Ellington A.G."/>
            <person name="Errington H."/>
            <person name="Frankish A."/>
            <person name="Frankland J."/>
            <person name="French L."/>
            <person name="Garner P."/>
            <person name="Garnett J."/>
            <person name="Gay L."/>
            <person name="Ghori M.R.J."/>
            <person name="Gibson R."/>
            <person name="Gilby L.M."/>
            <person name="Gillett W."/>
            <person name="Glithero R.J."/>
            <person name="Grafham D.V."/>
            <person name="Griffiths C."/>
            <person name="Griffiths-Jones S."/>
            <person name="Grocock R."/>
            <person name="Hammond S."/>
            <person name="Harrison E.S.I."/>
            <person name="Hart E."/>
            <person name="Haugen E."/>
            <person name="Heath P.D."/>
            <person name="Holmes S."/>
            <person name="Holt K."/>
            <person name="Howden P.J."/>
            <person name="Hunt A.R."/>
            <person name="Hunt S.E."/>
            <person name="Hunter G."/>
            <person name="Isherwood J."/>
            <person name="James R."/>
            <person name="Johnson C."/>
            <person name="Johnson D."/>
            <person name="Joy A."/>
            <person name="Kay M."/>
            <person name="Kershaw J.K."/>
            <person name="Kibukawa M."/>
            <person name="Kimberley A.M."/>
            <person name="King A."/>
            <person name="Knights A.J."/>
            <person name="Lad H."/>
            <person name="Laird G."/>
            <person name="Lawlor S."/>
            <person name="Leongamornlert D.A."/>
            <person name="Lloyd D.M."/>
            <person name="Loveland J."/>
            <person name="Lovell J."/>
            <person name="Lush M.J."/>
            <person name="Lyne R."/>
            <person name="Martin S."/>
            <person name="Mashreghi-Mohammadi M."/>
            <person name="Matthews L."/>
            <person name="Matthews N.S.W."/>
            <person name="McLaren S."/>
            <person name="Milne S."/>
            <person name="Mistry S."/>
            <person name="Moore M.J.F."/>
            <person name="Nickerson T."/>
            <person name="O'Dell C.N."/>
            <person name="Oliver K."/>
            <person name="Palmeiri A."/>
            <person name="Palmer S.A."/>
            <person name="Parker A."/>
            <person name="Patel D."/>
            <person name="Pearce A.V."/>
            <person name="Peck A.I."/>
            <person name="Pelan S."/>
            <person name="Phelps K."/>
            <person name="Phillimore B.J."/>
            <person name="Plumb R."/>
            <person name="Rajan J."/>
            <person name="Raymond C."/>
            <person name="Rouse G."/>
            <person name="Saenphimmachak C."/>
            <person name="Sehra H.K."/>
            <person name="Sheridan E."/>
            <person name="Shownkeen R."/>
            <person name="Sims S."/>
            <person name="Skuce C.D."/>
            <person name="Smith M."/>
            <person name="Steward C."/>
            <person name="Subramanian S."/>
            <person name="Sycamore N."/>
            <person name="Tracey A."/>
            <person name="Tromans A."/>
            <person name="Van Helmond Z."/>
            <person name="Wall M."/>
            <person name="Wallis J.M."/>
            <person name="White S."/>
            <person name="Whitehead S.L."/>
            <person name="Wilkinson J.E."/>
            <person name="Willey D.L."/>
            <person name="Williams H."/>
            <person name="Wilming L."/>
            <person name="Wray P.W."/>
            <person name="Wu Z."/>
            <person name="Coulson A."/>
            <person name="Vaudin M."/>
            <person name="Sulston J.E."/>
            <person name="Durbin R.M."/>
            <person name="Hubbard T."/>
            <person name="Wooster R."/>
            <person name="Dunham I."/>
            <person name="Carter N.P."/>
            <person name="McVean G."/>
            <person name="Ross M.T."/>
            <person name="Harrow J."/>
            <person name="Olson M.V."/>
            <person name="Beck S."/>
            <person name="Rogers J."/>
            <person name="Bentley D.R."/>
        </authorList>
    </citation>
    <scope>NUCLEOTIDE SEQUENCE [LARGE SCALE GENOMIC DNA]</scope>
</reference>
<reference key="6">
    <citation type="submission" date="2005-09" db="EMBL/GenBank/DDBJ databases">
        <authorList>
            <person name="Mural R.J."/>
            <person name="Istrail S."/>
            <person name="Sutton G.G."/>
            <person name="Florea L."/>
            <person name="Halpern A.L."/>
            <person name="Mobarry C.M."/>
            <person name="Lippert R."/>
            <person name="Walenz B."/>
            <person name="Shatkay H."/>
            <person name="Dew I."/>
            <person name="Miller J.R."/>
            <person name="Flanigan M.J."/>
            <person name="Edwards N.J."/>
            <person name="Bolanos R."/>
            <person name="Fasulo D."/>
            <person name="Halldorsson B.V."/>
            <person name="Hannenhalli S."/>
            <person name="Turner R."/>
            <person name="Yooseph S."/>
            <person name="Lu F."/>
            <person name="Nusskern D.R."/>
            <person name="Shue B.C."/>
            <person name="Zheng X.H."/>
            <person name="Zhong F."/>
            <person name="Delcher A.L."/>
            <person name="Huson D.H."/>
            <person name="Kravitz S.A."/>
            <person name="Mouchard L."/>
            <person name="Reinert K."/>
            <person name="Remington K.A."/>
            <person name="Clark A.G."/>
            <person name="Waterman M.S."/>
            <person name="Eichler E.E."/>
            <person name="Adams M.D."/>
            <person name="Hunkapiller M.W."/>
            <person name="Myers E.W."/>
            <person name="Venter J.C."/>
        </authorList>
    </citation>
    <scope>NUCLEOTIDE SEQUENCE [LARGE SCALE GENOMIC DNA]</scope>
</reference>
<reference key="7">
    <citation type="journal article" date="2004" name="Genome Res.">
        <title>The status, quality, and expansion of the NIH full-length cDNA project: the Mammalian Gene Collection (MGC).</title>
        <authorList>
            <consortium name="The MGC Project Team"/>
        </authorList>
    </citation>
    <scope>NUCLEOTIDE SEQUENCE [LARGE SCALE MRNA]</scope>
    <scope>VARIANT CYS-90</scope>
    <source>
        <tissue>Urinary bladder</tissue>
    </source>
</reference>
<reference key="8">
    <citation type="journal article" date="2010" name="J. Biol. Chem.">
        <title>A novel type of E3 ligase for the Ufm1 conjugation system.</title>
        <authorList>
            <person name="Tatsumi K."/>
            <person name="Sou Y.S."/>
            <person name="Tada N."/>
            <person name="Nakamura E."/>
            <person name="Iemura S."/>
            <person name="Natsume T."/>
            <person name="Kang S.H."/>
            <person name="Chung C.H."/>
            <person name="Kasahara M."/>
            <person name="Kominami E."/>
            <person name="Yamamoto M."/>
            <person name="Tanaka K."/>
            <person name="Komatsu M."/>
        </authorList>
    </citation>
    <scope>INTERACTION WITH UFL1</scope>
</reference>
<reference key="9">
    <citation type="journal article" date="2011" name="BMC Syst. Biol.">
        <title>Initial characterization of the human central proteome.</title>
        <authorList>
            <person name="Burkard T.R."/>
            <person name="Planyavsky M."/>
            <person name="Kaupe I."/>
            <person name="Breitwieser F.P."/>
            <person name="Buerckstuemmer T."/>
            <person name="Bennett K.L."/>
            <person name="Superti-Furga G."/>
            <person name="Colinge J."/>
        </authorList>
    </citation>
    <scope>IDENTIFICATION BY MASS SPECTROMETRY [LARGE SCALE ANALYSIS]</scope>
</reference>
<reference key="10">
    <citation type="journal article" date="2015" name="PLoS ONE">
        <title>Autism and intellectual disability-associated KIRREL3 interacts with neuronal proteins MAP1B and MYO16 with potential roles in neurodevelopment.</title>
        <authorList>
            <person name="Liu Y.F."/>
            <person name="Sowell S.M."/>
            <person name="Luo Y."/>
            <person name="Chaubey A."/>
            <person name="Cameron R.S."/>
            <person name="Kim H.G."/>
            <person name="Srivastava A.K."/>
        </authorList>
    </citation>
    <scope>INTERACTION WITH KIRREL3</scope>
</reference>
<reference key="11">
    <citation type="journal article" date="2015" name="Proteomics">
        <title>N-terminome analysis of the human mitochondrial proteome.</title>
        <authorList>
            <person name="Vaca Jacome A.S."/>
            <person name="Rabilloud T."/>
            <person name="Schaeffer-Reiss C."/>
            <person name="Rompais M."/>
            <person name="Ayoub D."/>
            <person name="Lane L."/>
            <person name="Bairoch A."/>
            <person name="Van Dorsselaer A."/>
            <person name="Carapito C."/>
        </authorList>
    </citation>
    <scope>IDENTIFICATION BY MASS SPECTROMETRY [LARGE SCALE ANALYSIS]</scope>
</reference>
<reference key="12">
    <citation type="journal article" date="2016" name="Cell Rep.">
        <title>Trans-binding mechanism of ubiquitin-like protein activation revealed by a UBA5-UFM1 Complex.</title>
        <authorList>
            <person name="Oweis W."/>
            <person name="Padala P."/>
            <person name="Hassouna F."/>
            <person name="Cohen-Kfir E."/>
            <person name="Gibbs D.R."/>
            <person name="Todd E.A."/>
            <person name="Berndsen C.E."/>
            <person name="Wiener R."/>
        </authorList>
    </citation>
    <scope>INTERACTION WITH UBA5</scope>
</reference>
<reference key="13">
    <citation type="journal article" date="2016" name="Elife">
        <title>Functional CRISPR screening identifies the ufmylation pathway as a regulator of SQSTM1/p62.</title>
        <authorList>
            <person name="DeJesus R."/>
            <person name="Moretti F."/>
            <person name="McAllister G."/>
            <person name="Wang Z."/>
            <person name="Bergman P."/>
            <person name="Liu S."/>
            <person name="Frias E."/>
            <person name="Alford J."/>
            <person name="Reece-Hoyes J.S."/>
            <person name="Lindeman A."/>
            <person name="Kelliher J."/>
            <person name="Russ C."/>
            <person name="Knehr J."/>
            <person name="Carbone W."/>
            <person name="Beibel M."/>
            <person name="Roma G."/>
            <person name="Ng A."/>
            <person name="Tallarico J.A."/>
            <person name="Porter J.A."/>
            <person name="Xavier R.J."/>
            <person name="Mickanin C."/>
            <person name="Murphy L.O."/>
            <person name="Hoffman G.R."/>
            <person name="Nyfeler B."/>
        </authorList>
    </citation>
    <scope>FUNCTION</scope>
</reference>
<reference key="14">
    <citation type="journal article" date="2018" name="Brain">
        <title>Biallelic UFM1 and UFC1 mutations expand the essential role of ufmylation in brain development.</title>
        <authorList>
            <person name="Nahorski M.S."/>
            <person name="Maddirevula S."/>
            <person name="Ishimura R."/>
            <person name="Alsahli S."/>
            <person name="Brady A.F."/>
            <person name="Begemann A."/>
            <person name="Mizushima T."/>
            <person name="Guzman-Vega F.J."/>
            <person name="Obata M."/>
            <person name="Ichimura Y."/>
            <person name="Alsaif H.S."/>
            <person name="Anazi S."/>
            <person name="Ibrahim N."/>
            <person name="Abdulwahab F."/>
            <person name="Hashem M."/>
            <person name="Monies D."/>
            <person name="Abouelhoda M."/>
            <person name="Meyer B.F."/>
            <person name="Alfadhel M."/>
            <person name="Eyaid W."/>
            <person name="Zweier M."/>
            <person name="Steindl K."/>
            <person name="Rauch A."/>
            <person name="Arold S.T."/>
            <person name="Woods C.G."/>
            <person name="Komatsu M."/>
            <person name="Alkuraya F.S."/>
        </authorList>
    </citation>
    <scope>FUNCTION</scope>
    <scope>INTERACTION WITH UFM1</scope>
    <scope>INTERACTION WITH UBA5</scope>
    <scope>MUTAGENESIS OF CYS-116</scope>
    <scope>ACTIVE SITE</scope>
    <scope>INVOLVEMENT IN NEDSG</scope>
    <scope>VARIANTS NEDSG GLN-23 AND ILE-106</scope>
    <scope>CHARACTERIZATION OF VARIANTS NEDSG GLN-23 AND ILE-106</scope>
</reference>
<reference key="15">
    <citation type="journal article" date="2019" name="Nat. Commun.">
        <title>UFL1 promotes histone H4 ufmylation and ATM activation.</title>
        <authorList>
            <person name="Qin B."/>
            <person name="Yu J."/>
            <person name="Nowsheen S."/>
            <person name="Wang M."/>
            <person name="Tu X."/>
            <person name="Liu T."/>
            <person name="Li H."/>
            <person name="Wang L."/>
            <person name="Lou Z."/>
        </authorList>
    </citation>
    <scope>INTERACTION WITH UFL1</scope>
</reference>
<reference key="16">
    <citation type="journal article" date="2019" name="Proc. Natl. Acad. Sci. U.S.A.">
        <title>Ribosomal protein RPL26 is the principal target of UFMylation.</title>
        <authorList>
            <person name="Walczak C.P."/>
            <person name="Leto D.E."/>
            <person name="Zhang L."/>
            <person name="Riepe C."/>
            <person name="Muller R.Y."/>
            <person name="DaRosa P.A."/>
            <person name="Ingolia N.T."/>
            <person name="Elias J.E."/>
            <person name="Kopito R.R."/>
        </authorList>
    </citation>
    <scope>FUNCTION</scope>
</reference>
<reference key="17">
    <citation type="journal article" date="2020" name="Cell">
        <title>A genome-wide ER-phagy screen highlights key roles of mitochondrial metabolism and ER-Resident UFMylation.</title>
        <authorList>
            <person name="Liang J.R."/>
            <person name="Lingeman E."/>
            <person name="Luong T."/>
            <person name="Ahmed S."/>
            <person name="Muhar M."/>
            <person name="Nguyen T."/>
            <person name="Olzmann J.A."/>
            <person name="Corn J.E."/>
        </authorList>
    </citation>
    <scope>FUNCTION</scope>
</reference>
<reference key="18">
    <citation type="journal article" date="2022" name="Cell Rep.">
        <title>Human UFSP1 is an active protease that regulates UFM1 maturation and UFMylation.</title>
        <authorList>
            <person name="Millrine D."/>
            <person name="Cummings T."/>
            <person name="Matthews S.P."/>
            <person name="Peter J.J."/>
            <person name="Magnussen H.M."/>
            <person name="Lange S.M."/>
            <person name="Macartney T."/>
            <person name="Lamoliatte F."/>
            <person name="Knebel A."/>
            <person name="Kulathu Y."/>
        </authorList>
    </citation>
    <scope>UFMYLATION AT LYS-122</scope>
</reference>
<reference key="19">
    <citation type="journal article" date="2022" name="EMBO J.">
        <title>A non-canonical scaffold-type E3 ligase complex mediates protein UFMylation.</title>
        <authorList>
            <person name="Peter J.J."/>
            <person name="Magnussen H.M."/>
            <person name="DaRosa P.A."/>
            <person name="Millrine D."/>
            <person name="Matthews S.P."/>
            <person name="Lamoliatte F."/>
            <person name="Sundaramoorthy R."/>
            <person name="Kopito R.R."/>
            <person name="Kulathu Y."/>
        </authorList>
    </citation>
    <scope>FUNCTION</scope>
    <scope>MUTAGENESIS OF LYS-108</scope>
    <scope>CHARACTERIZATION OF VARIANT NEDSG ILE-106</scope>
</reference>
<reference key="20">
    <citation type="journal article" date="2022" name="Proc. Natl. Acad. Sci. U.S.A.">
        <title>Signaling from the RNA sensor RIG-I is regulated by ufmylation.</title>
        <authorList>
            <person name="Snider D.L."/>
            <person name="Park M."/>
            <person name="Murphy K.A."/>
            <person name="Beachboard D.C."/>
            <person name="Horner S.M."/>
        </authorList>
    </citation>
    <scope>FUNCTION</scope>
</reference>
<reference key="21">
    <citation type="journal article" date="2023" name="EMBO Rep.">
        <title>Structural study of UFL1-UFC1 interaction uncovers the role of UFL1 N-terminal helix in ufmylation.</title>
        <authorList>
            <person name="Banerjee S."/>
            <person name="Varga J.K."/>
            <person name="Kumar M."/>
            <person name="Zoltsman G."/>
            <person name="Rotem-Bamberger S."/>
            <person name="Cohen-Kfir E."/>
            <person name="Isupov M.N."/>
            <person name="Rosenzweig R."/>
            <person name="Schueler-Furman O."/>
            <person name="Wiener R."/>
        </authorList>
    </citation>
    <scope>INTERACTION WITH UFL1</scope>
    <scope>MUTAGENESIS OF LYS-47</scope>
</reference>
<reference key="22">
    <citation type="journal article" date="2023" name="Proc. Natl. Acad. Sci. U.S.A.">
        <title>RPL26/uL24 UFMylation is essential for ribosome-associated quality control at the endoplasmic reticulum.</title>
        <authorList>
            <person name="Scavone F."/>
            <person name="Gumbin S.C."/>
            <person name="Da Rosa P.A."/>
            <person name="Kopito R.R."/>
        </authorList>
    </citation>
    <scope>FUNCTION</scope>
</reference>
<reference key="23">
    <citation type="journal article" date="2005" name="J. Biomol. NMR">
        <title>GFT NMR based resonance assignment for the 21 kDa human protein UFC1.</title>
        <authorList>
            <person name="Liu G."/>
            <person name="Aramini J."/>
            <person name="Atreya H.S."/>
            <person name="Eletsky A."/>
            <person name="Xiao R."/>
            <person name="Acton T."/>
            <person name="Ma L."/>
            <person name="Montelione G.T."/>
            <person name="Szyperski T."/>
        </authorList>
    </citation>
    <scope>PRELIMINARY STRUCTURE BY NMR</scope>
</reference>
<reference key="24">
    <citation type="journal article" date="2007" name="Biochem. Biophys. Res. Commun.">
        <title>Crystal structure of Ufc1, the Ufm1-conjugating enzyme.</title>
        <authorList>
            <person name="Mizushima T."/>
            <person name="Tatsumi K."/>
            <person name="Ozaki Y."/>
            <person name="Kawakami T."/>
            <person name="Suzuki A."/>
            <person name="Ogasahara K."/>
            <person name="Komatsu M."/>
            <person name="Kominami E."/>
            <person name="Tanaka K."/>
            <person name="Yamane T."/>
        </authorList>
    </citation>
    <scope>X-RAY CRYSTALLOGRAPHY (1.6 ANGSTROMS)</scope>
    <scope>INTERACTION WITH UBA5</scope>
    <scope>MUTAGENESIS OF GLN-30 AND LYS-33</scope>
</reference>
<reference key="25">
    <citation type="journal article" date="2009" name="J. Struct. Funct. Genomics">
        <title>NMR and X-RAY structures of human E2-like ubiquitin-fold modifier conjugating enzyme 1 (UFC1) reveal structural and functional conservation in the metazoan UFM1-UBA5-UFC1 ubiquination pathway.</title>
        <authorList>
            <person name="Liu G."/>
            <person name="Forouhar F."/>
            <person name="Eletsky A."/>
            <person name="Atreya H.S."/>
            <person name="Aramini J.M."/>
            <person name="Xiao R."/>
            <person name="Huang Y.J."/>
            <person name="Abashidze M."/>
            <person name="Seetharaman J."/>
            <person name="Liu J."/>
            <person name="Rost B."/>
            <person name="Acton T."/>
            <person name="Montelione G.T."/>
            <person name="Hunt J.F."/>
            <person name="Szyperski T."/>
        </authorList>
    </citation>
    <scope>X-RAY CRYSTALLOGRAPHY (2.54 ANGSTROMS)</scope>
    <scope>STRUCTURE BY NMR</scope>
</reference>
<reference evidence="27" key="26">
    <citation type="journal article" date="2021" name="Int. J. Mol. Sci.">
        <title>A concerted action of UBA5 C-terminal unstructured regions is important for transfer of activated UFM1 to UFC1.</title>
        <authorList>
            <person name="Wesch N."/>
            <person name="Loehr F."/>
            <person name="Rogova N."/>
            <person name="Doetsch V."/>
            <person name="Rogov V.V."/>
        </authorList>
    </citation>
    <scope>STRUCTURE BY NMR</scope>
</reference>
<reference evidence="24 25 26" key="27">
    <citation type="journal article" date="2021" name="Nat. Commun.">
        <title>Structural basis for UFM1 transfer from UBA5 to UFC1.</title>
        <authorList>
            <person name="Kumar M."/>
            <person name="Padala P."/>
            <person name="Fahoum J."/>
            <person name="Hassouna F."/>
            <person name="Tsaban T."/>
            <person name="Zoltsman G."/>
            <person name="Banerjee S."/>
            <person name="Cohen-Kfir E."/>
            <person name="Dessau M."/>
            <person name="Rosenzweig R."/>
            <person name="Isupov M.N."/>
            <person name="Schueler-Furman O."/>
            <person name="Wiener R."/>
        </authorList>
    </citation>
    <scope>X-RAY CRYSTALLOGRAPHY (1.95 ANGSTROMS) IN COMPLEX WITH UBA5</scope>
    <scope>FUNCTION</scope>
    <scope>INTERACTION WITH UBA5</scope>
    <scope>ACTIVE SITE</scope>
    <scope>MUTAGENESIS OF TYR-110 AND PHE-121</scope>
</reference>
<reference evidence="28" key="28">
    <citation type="journal article" date="2024" name="Nature">
        <title>The UFM1 E3 ligase recognizes and releases 60S ribosomes from ER translocons.</title>
        <authorList>
            <person name="Makhlouf L."/>
            <person name="Peter J.J."/>
            <person name="Magnussen H.M."/>
            <person name="Thakur R."/>
            <person name="Millrine D."/>
            <person name="Minshull T.C."/>
            <person name="Harrison G."/>
            <person name="Varghese J."/>
            <person name="Lamoliatte F."/>
            <person name="Foglizzo M."/>
            <person name="Macartney T."/>
            <person name="Calabrese A.N."/>
            <person name="Zeqiraj E."/>
            <person name="Kulathu Y."/>
        </authorList>
    </citation>
    <scope>X-RAY CRYSTALLOGRAPHY (1.78 ANGSTROMS) IN COMPLEX WITH UFL1; UFM1 AND DDRGK1</scope>
    <scope>FUNCTION</scope>
    <scope>INTERACTION WITH UFL1</scope>
    <scope>MUTAGENESIS OF LEU-32; ILE-40 AND ASP-50</scope>
</reference>
<keyword id="KW-0002">3D-structure</keyword>
<keyword id="KW-0225">Disease variant</keyword>
<keyword id="KW-1017">Isopeptide bond</keyword>
<keyword id="KW-1267">Proteomics identification</keyword>
<keyword id="KW-1185">Reference proteome</keyword>
<keyword id="KW-0832">Ubl conjugation</keyword>
<keyword id="KW-0833">Ubl conjugation pathway</keyword>
<organism>
    <name type="scientific">Homo sapiens</name>
    <name type="common">Human</name>
    <dbReference type="NCBI Taxonomy" id="9606"/>
    <lineage>
        <taxon>Eukaryota</taxon>
        <taxon>Metazoa</taxon>
        <taxon>Chordata</taxon>
        <taxon>Craniata</taxon>
        <taxon>Vertebrata</taxon>
        <taxon>Euteleostomi</taxon>
        <taxon>Mammalia</taxon>
        <taxon>Eutheria</taxon>
        <taxon>Euarchontoglires</taxon>
        <taxon>Primates</taxon>
        <taxon>Haplorrhini</taxon>
        <taxon>Catarrhini</taxon>
        <taxon>Hominidae</taxon>
        <taxon>Homo</taxon>
    </lineage>
</organism>
<proteinExistence type="evidence at protein level"/>
<feature type="chain" id="PRO_0000082613" description="Ubiquitin-fold modifier-conjugating enzyme 1">
    <location>
        <begin position="1"/>
        <end position="167"/>
    </location>
</feature>
<feature type="active site" description="Glycyl thioester intermediate" evidence="1 8 12">
    <location>
        <position position="116"/>
    </location>
</feature>
<feature type="cross-link" description="Glycyl lysine isopeptide (Lys-Gly) (interchain with G-Cter in UFM1)" evidence="14">
    <location>
        <position position="122"/>
    </location>
</feature>
<feature type="sequence variant" id="VAR_081216" description="In NEDSG; decreased ability to form thioester bond with UFM1; decreased protein ufmylation; dbSNP:rs1181612302." evidence="8">
    <original>R</original>
    <variation>Q</variation>
    <location>
        <position position="23"/>
    </location>
</feature>
<feature type="sequence variant" id="VAR_028312" description="In dbSNP:rs17849932." evidence="2">
    <original>Y</original>
    <variation>C</variation>
    <location>
        <position position="90"/>
    </location>
</feature>
<feature type="sequence variant" id="VAR_081217" description="In NEDSG; decreased ability to form thioester bond with UFM1; decreased protein ufmylation; dbSNP:rs1553232770." evidence="8 15">
    <original>T</original>
    <variation>I</variation>
    <location>
        <position position="106"/>
    </location>
</feature>
<feature type="mutagenesis site" description="Does not affect neither UBA5-binding nor thioester formation with UFM1." evidence="3">
    <original>Q</original>
    <variation>A</variation>
    <location>
        <position position="30"/>
    </location>
</feature>
<feature type="mutagenesis site" description="Abolished interaction with UFL1." evidence="18">
    <original>L</original>
    <variation>R</variation>
    <location>
        <position position="32"/>
    </location>
</feature>
<feature type="mutagenesis site" description="Impairs binding to UBA5 and thioester formation with UFM1." evidence="3">
    <original>K</original>
    <variation>A</variation>
    <location>
        <position position="33"/>
    </location>
</feature>
<feature type="mutagenesis site" description="Abolished interaction with UFL1." evidence="18">
    <original>I</original>
    <variation>R</variation>
    <location>
        <position position="40"/>
    </location>
</feature>
<feature type="mutagenesis site" description="Decreased interaction with UFL1." evidence="17">
    <original>K</original>
    <variation>E</variation>
    <location>
        <position position="47"/>
    </location>
</feature>
<feature type="mutagenesis site" description="Decreased ribosome ufmylation." evidence="18">
    <original>D</original>
    <variation>A</variation>
    <location>
        <position position="50"/>
    </location>
</feature>
<feature type="mutagenesis site" description="Abolished ufmylation." evidence="15">
    <original>K</original>
    <variation>A</variation>
    <location>
        <position position="108"/>
    </location>
</feature>
<feature type="mutagenesis site" description="Decreased UFM1 transfer." evidence="12">
    <original>Y</original>
    <variation>A</variation>
    <location>
        <position position="110"/>
    </location>
</feature>
<feature type="mutagenesis site" description="Instead of the formation of an intermediate complex with a thiol ester bond between UFC1 (E2-like enzyme) and UFM1 (substrate), a stable complex with an O-ester bond is formed." evidence="1 8">
    <original>C</original>
    <variation>S</variation>
    <location>
        <position position="116"/>
    </location>
</feature>
<feature type="mutagenesis site" description="Decreased UFM1 transfer." evidence="12">
    <original>F</original>
    <variation>A</variation>
    <location>
        <position position="121"/>
    </location>
</feature>
<feature type="sequence conflict" description="In Ref. 4; BAF85465." evidence="22" ref="4">
    <original>I</original>
    <variation>N</variation>
    <location>
        <position position="159"/>
    </location>
</feature>
<feature type="sequence conflict" description="In Ref. 1; BAD15374 and 3; AAF29119." evidence="22" ref="1 3">
    <original>Q</original>
    <variation>H</variation>
    <location>
        <position position="160"/>
    </location>
</feature>
<feature type="helix" evidence="29">
    <location>
        <begin position="2"/>
        <end position="10"/>
    </location>
</feature>
<feature type="helix" evidence="30">
    <location>
        <begin position="22"/>
        <end position="24"/>
    </location>
</feature>
<feature type="helix" evidence="29">
    <location>
        <begin position="26"/>
        <end position="48"/>
    </location>
</feature>
<feature type="strand" evidence="29">
    <location>
        <begin position="54"/>
        <end position="58"/>
    </location>
</feature>
<feature type="strand" evidence="29">
    <location>
        <begin position="64"/>
        <end position="73"/>
    </location>
</feature>
<feature type="strand" evidence="29">
    <location>
        <begin position="76"/>
        <end position="85"/>
    </location>
</feature>
<feature type="turn" evidence="29">
    <location>
        <begin position="88"/>
        <end position="92"/>
    </location>
</feature>
<feature type="helix" evidence="29">
    <location>
        <begin position="100"/>
        <end position="102"/>
    </location>
</feature>
<feature type="turn" evidence="29">
    <location>
        <begin position="103"/>
        <end position="105"/>
    </location>
</feature>
<feature type="strand" evidence="29">
    <location>
        <begin position="107"/>
        <end position="109"/>
    </location>
</feature>
<feature type="strand" evidence="29">
    <location>
        <begin position="113"/>
        <end position="115"/>
    </location>
</feature>
<feature type="helix" evidence="29">
    <location>
        <begin position="121"/>
        <end position="128"/>
    </location>
</feature>
<feature type="helix" evidence="29">
    <location>
        <begin position="134"/>
        <end position="140"/>
    </location>
</feature>
<feature type="helix" evidence="29">
    <location>
        <begin position="142"/>
        <end position="156"/>
    </location>
</feature>
<feature type="strand" evidence="29">
    <location>
        <begin position="162"/>
        <end position="164"/>
    </location>
</feature>
<protein>
    <recommendedName>
        <fullName evidence="22">Ubiquitin-fold modifier-conjugating enzyme 1</fullName>
        <shortName evidence="21">Ufm1-conjugating enzyme 1</shortName>
    </recommendedName>
</protein>
<sequence>MADEATRRVVSEIPVLKTNAGPRDRELWVQRLKEEYQSLIRYVENNKNADNDWFRLESNKEGTRWFGKCWYIHDLLKYEFDIEFDIPITYPTTAPEIAVPELDGKTAKMYRGGKICLTDHFKPLWARNVPKFGLAHLMALGLGPWLAVEIPDLIQKGVIQHKEKCNQ</sequence>
<gene>
    <name evidence="21 23" type="primary">UFC1</name>
    <name evidence="19" type="ORF">CGI-126</name>
    <name evidence="20" type="ORF">HSPC155</name>
</gene>
<comment type="function">
    <text evidence="1 6 8 9 11 12 13 15 16 18">E2-like enzyme which specifically catalyzes the second step in ufmylation (PubMed:15071506, PubMed:29868776, PubMed:30626644, PubMed:34588452, PubMed:35394863, PubMed:36121123, PubMed:38383789). Accepts the ubiquitin-like modifier UFM1 from the E1 enzyme UBA5 and forms an intermediate with UFM1 via a thioester linkage (PubMed:15071506, PubMed:29868776, PubMed:34588452, PubMed:38383789). Ufmylation is involved in various processes, such as ribosome recycling, response to DNA damage, interferon response or reticulophagy (also called ER-phagy) (PubMed:27351204, PubMed:32160526, PubMed:35394863, PubMed:37036982, PubMed:38383789).</text>
</comment>
<comment type="subunit">
    <text evidence="3 4 5 7 8 10 12 17 18">Interacts with UBA5 (via C-terminus) (PubMed:17825256, PubMed:27653677, PubMed:29868776, PubMed:34588452). Interacts with UFL1 (PubMed:20018847, PubMed:30886146, PubMed:37988244, PubMed:38383789). Interacts with UFM1 (PubMed:29868776). Interacts with KIRREL3 (PubMed:25902260).</text>
</comment>
<comment type="interaction">
    <interactant intactId="EBI-1045733">
        <id>Q9Y3C8</id>
    </interactant>
    <interactant intactId="EBI-17183751">
        <id>X5D778</id>
        <label>ANKRD11</label>
    </interactant>
    <organismsDiffer>false</organismsDiffer>
    <experiments>3</experiments>
</comment>
<comment type="interaction">
    <interactant intactId="EBI-1045733">
        <id>Q9Y3C8</id>
    </interactant>
    <interactant intactId="EBI-718818">
        <id>Q96JB5</id>
        <label>CDK5RAP3</label>
    </interactant>
    <organismsDiffer>false</organismsDiffer>
    <experiments>6</experiments>
</comment>
<comment type="interaction">
    <interactant intactId="EBI-1045733">
        <id>Q9Y3C8</id>
    </interactant>
    <interactant intactId="EBI-356700">
        <id>P57678</id>
        <label>GEMIN4</label>
    </interactant>
    <organismsDiffer>false</organismsDiffer>
    <experiments>3</experiments>
</comment>
<comment type="interaction">
    <interactant intactId="EBI-1045733">
        <id>Q9Y3C8</id>
    </interactant>
    <interactant intactId="EBI-16427312">
        <id>Q8IZU9</id>
        <label>KIRREL3</label>
    </interactant>
    <organismsDiffer>false</organismsDiffer>
    <experiments>4</experiments>
</comment>
<comment type="interaction">
    <interactant intactId="EBI-1045733">
        <id>Q9Y3C8</id>
    </interactant>
    <interactant intactId="EBI-741158">
        <id>Q96HA8</id>
        <label>NTAQ1</label>
    </interactant>
    <organismsDiffer>false</organismsDiffer>
    <experiments>3</experiments>
</comment>
<comment type="interaction">
    <interactant intactId="EBI-1045733">
        <id>Q9Y3C8</id>
    </interactant>
    <interactant intactId="EBI-21251460">
        <id>O60260-5</id>
        <label>PRKN</label>
    </interactant>
    <organismsDiffer>false</organismsDiffer>
    <experiments>3</experiments>
</comment>
<comment type="interaction">
    <interactant intactId="EBI-1045733">
        <id>Q9Y3C8</id>
    </interactant>
    <interactant intactId="EBI-1048088">
        <id>O94874</id>
        <label>UFL1</label>
    </interactant>
    <organismsDiffer>false</organismsDiffer>
    <experiments>9</experiments>
</comment>
<comment type="domain">
    <text evidence="12">In absence of UBA5, the active site is solvated by water molecules thereby reducing its nucleophilic activity (PubMed:34588452). A linker region of UBA5 is required to reduce the amount of water molecules in the vicinity of the active site and elevate its nucleophilic activity (PubMed:34588452).</text>
</comment>
<comment type="PTM">
    <text evidence="14">Ufmylated at Lys-122 (PubMed:35926457). Deufmylated by UFSP1 (PubMed:35926457).</text>
</comment>
<comment type="disease" evidence="8 15">
    <disease id="DI-05305">
        <name>Neurodevelopmental disorder with spasticity and poor growth</name>
        <acronym>NEDSG</acronym>
        <description>An autosomal recessive disorder apparent soon after birth or in early infancy. NEDSG is characterized by axial hypotonia, delayed psychomotor development, poor feeding, failure to thrive, peripheral spasticity with hyperreflexia, poor overall growth, and microcephaly in most patients. Additional variable features include contractures, facial dysmorphisms, and ocular movement abnormalities.</description>
        <dbReference type="MIM" id="618076"/>
    </disease>
    <text>The disease is caused by variants affecting the gene represented in this entry.</text>
</comment>
<comment type="similarity">
    <text evidence="22">Belongs to the ubiquitin-conjugating enzyme family. UFC1 subfamily.</text>
</comment>
<accession>Q9Y3C8</accession>
<accession>A8K9R1</accession>
<accession>D3DVF9</accession>
<accession>Q549X0</accession>
<accession>Q5VTX1</accession>
<accession>Q9BS96</accession>
<accession>Q9P009</accession>
<dbReference type="EMBL" id="AB154405">
    <property type="protein sequence ID" value="BAD15374.1"/>
    <property type="molecule type" value="mRNA"/>
</dbReference>
<dbReference type="EMBL" id="AF151884">
    <property type="protein sequence ID" value="AAD34121.1"/>
    <property type="molecule type" value="mRNA"/>
</dbReference>
<dbReference type="EMBL" id="AF161504">
    <property type="protein sequence ID" value="AAF29119.1"/>
    <property type="molecule type" value="mRNA"/>
</dbReference>
<dbReference type="EMBL" id="AK292776">
    <property type="protein sequence ID" value="BAF85465.1"/>
    <property type="molecule type" value="mRNA"/>
</dbReference>
<dbReference type="EMBL" id="AL590714">
    <property type="status" value="NOT_ANNOTATED_CDS"/>
    <property type="molecule type" value="Genomic_DNA"/>
</dbReference>
<dbReference type="EMBL" id="CH471121">
    <property type="protein sequence ID" value="EAW52646.1"/>
    <property type="molecule type" value="Genomic_DNA"/>
</dbReference>
<dbReference type="EMBL" id="CH471121">
    <property type="protein sequence ID" value="EAW52647.1"/>
    <property type="molecule type" value="Genomic_DNA"/>
</dbReference>
<dbReference type="EMBL" id="BC005187">
    <property type="protein sequence ID" value="AAH05187.1"/>
    <property type="molecule type" value="mRNA"/>
</dbReference>
<dbReference type="CCDS" id="CCDS1220.1"/>
<dbReference type="RefSeq" id="NP_057490.2">
    <property type="nucleotide sequence ID" value="NM_016406.4"/>
</dbReference>
<dbReference type="RefSeq" id="XP_016856939.1">
    <property type="nucleotide sequence ID" value="XM_017001450.1"/>
</dbReference>
<dbReference type="RefSeq" id="XP_016856940.1">
    <property type="nucleotide sequence ID" value="XM_017001451.1"/>
</dbReference>
<dbReference type="RefSeq" id="XP_054192944.1">
    <property type="nucleotide sequence ID" value="XM_054336969.1"/>
</dbReference>
<dbReference type="RefSeq" id="XP_054192945.1">
    <property type="nucleotide sequence ID" value="XM_054336970.1"/>
</dbReference>
<dbReference type="RefSeq" id="XP_054192946.1">
    <property type="nucleotide sequence ID" value="XM_054336971.1"/>
</dbReference>
<dbReference type="RefSeq" id="XP_054192947.1">
    <property type="nucleotide sequence ID" value="XM_054336972.1"/>
</dbReference>
<dbReference type="PDB" id="2K07">
    <property type="method" value="NMR"/>
    <property type="chains" value="A=1-167"/>
</dbReference>
<dbReference type="PDB" id="2Z6O">
    <property type="method" value="X-ray"/>
    <property type="resolution" value="1.60 A"/>
    <property type="chains" value="A=1-167"/>
</dbReference>
<dbReference type="PDB" id="2Z6P">
    <property type="method" value="X-ray"/>
    <property type="resolution" value="1.80 A"/>
    <property type="chains" value="A=1-167"/>
</dbReference>
<dbReference type="PDB" id="3EVX">
    <property type="method" value="X-ray"/>
    <property type="resolution" value="2.54 A"/>
    <property type="chains" value="A/B/C/D=1-167"/>
</dbReference>
<dbReference type="PDB" id="7NVJ">
    <property type="method" value="X-ray"/>
    <property type="resolution" value="2.20 A"/>
    <property type="chains" value="AAA=1-167"/>
</dbReference>
<dbReference type="PDB" id="7NVK">
    <property type="method" value="X-ray"/>
    <property type="resolution" value="2.65 A"/>
    <property type="chains" value="AAA=1-167"/>
</dbReference>
<dbReference type="PDB" id="7NW1">
    <property type="method" value="X-ray"/>
    <property type="resolution" value="1.95 A"/>
    <property type="chains" value="AAA/BBB=1-167"/>
</dbReference>
<dbReference type="PDB" id="7OVC">
    <property type="method" value="NMR"/>
    <property type="chains" value="A=1-167"/>
</dbReference>
<dbReference type="PDB" id="8BZR">
    <property type="method" value="X-ray"/>
    <property type="resolution" value="1.78 A"/>
    <property type="chains" value="A=1-167"/>
</dbReference>
<dbReference type="PDB" id="8C0D">
    <property type="method" value="X-ray"/>
    <property type="resolution" value="2.56 A"/>
    <property type="chains" value="C/F=1-167"/>
</dbReference>
<dbReference type="PDBsum" id="2K07"/>
<dbReference type="PDBsum" id="2Z6O"/>
<dbReference type="PDBsum" id="2Z6P"/>
<dbReference type="PDBsum" id="3EVX"/>
<dbReference type="PDBsum" id="7NVJ"/>
<dbReference type="PDBsum" id="7NVK"/>
<dbReference type="PDBsum" id="7NW1"/>
<dbReference type="PDBsum" id="7OVC"/>
<dbReference type="PDBsum" id="8BZR"/>
<dbReference type="PDBsum" id="8C0D"/>
<dbReference type="BMRB" id="Q9Y3C8"/>
<dbReference type="SMR" id="Q9Y3C8"/>
<dbReference type="BioGRID" id="119577">
    <property type="interactions" value="71"/>
</dbReference>
<dbReference type="FunCoup" id="Q9Y3C8">
    <property type="interactions" value="567"/>
</dbReference>
<dbReference type="IntAct" id="Q9Y3C8">
    <property type="interactions" value="14"/>
</dbReference>
<dbReference type="STRING" id="9606.ENSP00000356982"/>
<dbReference type="GlyGen" id="Q9Y3C8">
    <property type="glycosylation" value="1 site, 1 O-linked glycan (1 site)"/>
</dbReference>
<dbReference type="iPTMnet" id="Q9Y3C8"/>
<dbReference type="PhosphoSitePlus" id="Q9Y3C8"/>
<dbReference type="SwissPalm" id="Q9Y3C8"/>
<dbReference type="BioMuta" id="UFC1"/>
<dbReference type="DMDM" id="116242840"/>
<dbReference type="jPOST" id="Q9Y3C8"/>
<dbReference type="MassIVE" id="Q9Y3C8"/>
<dbReference type="PaxDb" id="9606-ENSP00000356982"/>
<dbReference type="PeptideAtlas" id="Q9Y3C8"/>
<dbReference type="ProteomicsDB" id="86017"/>
<dbReference type="Pumba" id="Q9Y3C8"/>
<dbReference type="Antibodypedia" id="34296">
    <property type="antibodies" value="223 antibodies from 27 providers"/>
</dbReference>
<dbReference type="DNASU" id="51506"/>
<dbReference type="Ensembl" id="ENST00000368003.6">
    <property type="protein sequence ID" value="ENSP00000356982.5"/>
    <property type="gene ID" value="ENSG00000143222.12"/>
</dbReference>
<dbReference type="GeneID" id="51506"/>
<dbReference type="KEGG" id="hsa:51506"/>
<dbReference type="MANE-Select" id="ENST00000368003.6">
    <property type="protein sequence ID" value="ENSP00000356982.5"/>
    <property type="RefSeq nucleotide sequence ID" value="NM_016406.4"/>
    <property type="RefSeq protein sequence ID" value="NP_057490.2"/>
</dbReference>
<dbReference type="UCSC" id="uc001fyd.5">
    <property type="organism name" value="human"/>
</dbReference>
<dbReference type="AGR" id="HGNC:26941"/>
<dbReference type="CTD" id="51506"/>
<dbReference type="DisGeNET" id="51506"/>
<dbReference type="GeneCards" id="UFC1"/>
<dbReference type="HGNC" id="HGNC:26941">
    <property type="gene designation" value="UFC1"/>
</dbReference>
<dbReference type="HPA" id="ENSG00000143222">
    <property type="expression patterns" value="Low tissue specificity"/>
</dbReference>
<dbReference type="MalaCards" id="UFC1"/>
<dbReference type="MIM" id="610554">
    <property type="type" value="gene"/>
</dbReference>
<dbReference type="MIM" id="618076">
    <property type="type" value="phenotype"/>
</dbReference>
<dbReference type="neXtProt" id="NX_Q9Y3C8"/>
<dbReference type="OpenTargets" id="ENSG00000143222"/>
<dbReference type="PharmGKB" id="PA142670644"/>
<dbReference type="VEuPathDB" id="HostDB:ENSG00000143222"/>
<dbReference type="eggNOG" id="KOG3357">
    <property type="taxonomic scope" value="Eukaryota"/>
</dbReference>
<dbReference type="GeneTree" id="ENSGT00390000008196"/>
<dbReference type="HOGENOM" id="CLU_101170_0_0_1"/>
<dbReference type="InParanoid" id="Q9Y3C8"/>
<dbReference type="OMA" id="LWQKNVP"/>
<dbReference type="OrthoDB" id="10256182at2759"/>
<dbReference type="PAN-GO" id="Q9Y3C8">
    <property type="GO annotations" value="2 GO annotations based on evolutionary models"/>
</dbReference>
<dbReference type="PhylomeDB" id="Q9Y3C8"/>
<dbReference type="TreeFam" id="TF313587"/>
<dbReference type="PathwayCommons" id="Q9Y3C8"/>
<dbReference type="SignaLink" id="Q9Y3C8"/>
<dbReference type="BioGRID-ORCS" id="51506">
    <property type="hits" value="236 hits in 1169 CRISPR screens"/>
</dbReference>
<dbReference type="ChiTaRS" id="UFC1">
    <property type="organism name" value="human"/>
</dbReference>
<dbReference type="EvolutionaryTrace" id="Q9Y3C8"/>
<dbReference type="GenomeRNAi" id="51506"/>
<dbReference type="Pharos" id="Q9Y3C8">
    <property type="development level" value="Tbio"/>
</dbReference>
<dbReference type="PRO" id="PR:Q9Y3C8"/>
<dbReference type="Proteomes" id="UP000005640">
    <property type="component" value="Chromosome 1"/>
</dbReference>
<dbReference type="RNAct" id="Q9Y3C8">
    <property type="molecule type" value="protein"/>
</dbReference>
<dbReference type="Bgee" id="ENSG00000143222">
    <property type="expression patterns" value="Expressed in bronchial epithelial cell and 208 other cell types or tissues"/>
</dbReference>
<dbReference type="GO" id="GO:0070062">
    <property type="term" value="C:extracellular exosome"/>
    <property type="evidence" value="ECO:0007005"/>
    <property type="project" value="UniProtKB"/>
</dbReference>
<dbReference type="GO" id="GO:0061657">
    <property type="term" value="F:UFM1 conjugating enzyme activity"/>
    <property type="evidence" value="ECO:0000314"/>
    <property type="project" value="UniProtKB"/>
</dbReference>
<dbReference type="GO" id="GO:0071568">
    <property type="term" value="F:UFM1 transferase activity"/>
    <property type="evidence" value="ECO:0000318"/>
    <property type="project" value="GO_Central"/>
</dbReference>
<dbReference type="GO" id="GO:0007420">
    <property type="term" value="P:brain development"/>
    <property type="evidence" value="ECO:0000315"/>
    <property type="project" value="UniProtKB"/>
</dbReference>
<dbReference type="GO" id="GO:1990592">
    <property type="term" value="P:protein K69-linked ufmylation"/>
    <property type="evidence" value="ECO:0000314"/>
    <property type="project" value="UniProtKB"/>
</dbReference>
<dbReference type="GO" id="GO:0071569">
    <property type="term" value="P:protein ufmylation"/>
    <property type="evidence" value="ECO:0000314"/>
    <property type="project" value="UniProtKB"/>
</dbReference>
<dbReference type="GO" id="GO:0032649">
    <property type="term" value="P:regulation of type II interferon production"/>
    <property type="evidence" value="ECO:0000250"/>
    <property type="project" value="UniProtKB"/>
</dbReference>
<dbReference type="GO" id="GO:0034976">
    <property type="term" value="P:response to endoplasmic reticulum stress"/>
    <property type="evidence" value="ECO:0000314"/>
    <property type="project" value="MGI"/>
</dbReference>
<dbReference type="GO" id="GO:0061709">
    <property type="term" value="P:reticulophagy"/>
    <property type="evidence" value="ECO:0000315"/>
    <property type="project" value="UniProtKB"/>
</dbReference>
<dbReference type="CDD" id="cd11686">
    <property type="entry name" value="UBCc_UFC1"/>
    <property type="match status" value="1"/>
</dbReference>
<dbReference type="FunFam" id="3.10.110.10:FF:000042">
    <property type="entry name" value="Ubiquitin-fold modifier-conjugating enzyme 1"/>
    <property type="match status" value="1"/>
</dbReference>
<dbReference type="Gene3D" id="3.10.110.10">
    <property type="entry name" value="Ubiquitin Conjugating Enzyme"/>
    <property type="match status" value="1"/>
</dbReference>
<dbReference type="InterPro" id="IPR016135">
    <property type="entry name" value="UBQ-conjugating_enzyme/RWD"/>
</dbReference>
<dbReference type="InterPro" id="IPR014806">
    <property type="entry name" value="Ufc1"/>
</dbReference>
<dbReference type="PANTHER" id="PTHR12921">
    <property type="entry name" value="UBIQUITIN-FOLD MODIFIER-CONJUGATING ENZYME 1"/>
    <property type="match status" value="1"/>
</dbReference>
<dbReference type="PANTHER" id="PTHR12921:SF0">
    <property type="entry name" value="UBIQUITIN-FOLD MODIFIER-CONJUGATING ENZYME 1"/>
    <property type="match status" value="1"/>
</dbReference>
<dbReference type="Pfam" id="PF08694">
    <property type="entry name" value="UFC1"/>
    <property type="match status" value="1"/>
</dbReference>
<dbReference type="PIRSF" id="PIRSF008716">
    <property type="entry name" value="DUF1782"/>
    <property type="match status" value="1"/>
</dbReference>
<dbReference type="SUPFAM" id="SSF54495">
    <property type="entry name" value="UBC-like"/>
    <property type="match status" value="1"/>
</dbReference>
<name>UFC1_HUMAN</name>
<evidence type="ECO:0000269" key="1">
    <source>
    </source>
</evidence>
<evidence type="ECO:0000269" key="2">
    <source>
    </source>
</evidence>
<evidence type="ECO:0000269" key="3">
    <source>
    </source>
</evidence>
<evidence type="ECO:0000269" key="4">
    <source>
    </source>
</evidence>
<evidence type="ECO:0000269" key="5">
    <source>
    </source>
</evidence>
<evidence type="ECO:0000269" key="6">
    <source>
    </source>
</evidence>
<evidence type="ECO:0000269" key="7">
    <source>
    </source>
</evidence>
<evidence type="ECO:0000269" key="8">
    <source>
    </source>
</evidence>
<evidence type="ECO:0000269" key="9">
    <source>
    </source>
</evidence>
<evidence type="ECO:0000269" key="10">
    <source>
    </source>
</evidence>
<evidence type="ECO:0000269" key="11">
    <source>
    </source>
</evidence>
<evidence type="ECO:0000269" key="12">
    <source>
    </source>
</evidence>
<evidence type="ECO:0000269" key="13">
    <source>
    </source>
</evidence>
<evidence type="ECO:0000269" key="14">
    <source>
    </source>
</evidence>
<evidence type="ECO:0000269" key="15">
    <source>
    </source>
</evidence>
<evidence type="ECO:0000269" key="16">
    <source>
    </source>
</evidence>
<evidence type="ECO:0000269" key="17">
    <source>
    </source>
</evidence>
<evidence type="ECO:0000269" key="18">
    <source>
    </source>
</evidence>
<evidence type="ECO:0000303" key="19">
    <source>
    </source>
</evidence>
<evidence type="ECO:0000303" key="20">
    <source>
    </source>
</evidence>
<evidence type="ECO:0000303" key="21">
    <source>
    </source>
</evidence>
<evidence type="ECO:0000305" key="22"/>
<evidence type="ECO:0000312" key="23">
    <source>
        <dbReference type="HGNC" id="HGNC:26941"/>
    </source>
</evidence>
<evidence type="ECO:0007744" key="24">
    <source>
        <dbReference type="PDB" id="7NVJ"/>
    </source>
</evidence>
<evidence type="ECO:0007744" key="25">
    <source>
        <dbReference type="PDB" id="7NVK"/>
    </source>
</evidence>
<evidence type="ECO:0007744" key="26">
    <source>
        <dbReference type="PDB" id="7NW1"/>
    </source>
</evidence>
<evidence type="ECO:0007744" key="27">
    <source>
        <dbReference type="PDB" id="7OVC"/>
    </source>
</evidence>
<evidence type="ECO:0007744" key="28">
    <source>
        <dbReference type="PDB" id="8C0D"/>
    </source>
</evidence>
<evidence type="ECO:0007829" key="29">
    <source>
        <dbReference type="PDB" id="2Z6O"/>
    </source>
</evidence>
<evidence type="ECO:0007829" key="30">
    <source>
        <dbReference type="PDB" id="8BZR"/>
    </source>
</evidence>